<comment type="function">
    <text evidence="3 4 10">Present in the infant gut, this enzyme is involved in the assimilation of type-1 human milk oligosaccharides (HMOs). It hydrolyzes via a retaining mechanism the beta-D-GlcNAc-(1-&gt;3)-beta-D-Gal linkage in lacto-N-tetraose (LNT or beta-D-Gal-(1-&gt;3)-beta-D-GlcNAc-(1-&gt;3)-beta-D-Gal-(1-&gt;4)-D-Glc), an abundant HMO unique to human breast milk, releasing lacto-N-biose (LNB or beta-D-Gal-(1-&gt;3)-D-GlcNAc) and lactose (PubMed:18469123, PubMed:23479733). Is a key enzymatic factor for growth and proliferation of B.bifidum in the gut ecosystem of breast-fed infants (Probable). Has substrate preference for unmodified beta-linked LNB since it does not hydrolyze the fucosylated forms of lacto-N-tetraose (lacto-N-fucopentaose I and II) or lacto-N-neotetraose. Is also able to display transglycosylation activity in vitro (PubMed:18469123).</text>
</comment>
<comment type="catalytic activity">
    <reaction evidence="3 4">
        <text>beta-D-Gal-(1-&gt;3)-beta-D-GlcNAc-(1-&gt;3)-beta-D-Gal-(1-&gt;4)-D-Glc + H2O = beta-D-galactosyl-(1-&gt;3)-N-acetyl-D-glucosamine + lactose</text>
        <dbReference type="Rhea" id="RHEA:21568"/>
        <dbReference type="ChEBI" id="CHEBI:15377"/>
        <dbReference type="ChEBI" id="CHEBI:17716"/>
        <dbReference type="ChEBI" id="CHEBI:27707"/>
        <dbReference type="ChEBI" id="CHEBI:30248"/>
        <dbReference type="EC" id="3.2.1.140"/>
    </reaction>
    <physiologicalReaction direction="left-to-right" evidence="9 10">
        <dbReference type="Rhea" id="RHEA:21569"/>
    </physiologicalReaction>
</comment>
<comment type="biophysicochemical properties">
    <kinetics>
        <KM evidence="4">626 uM for lacto-N-tetraose</KM>
        <KM evidence="3">68 uM for chromogenic LNB-beta-pNP (beta-D-Gal-(1-&gt;3)-beta-D-GlcNAc-pNP)</KM>
        <text evidence="3 4">kcat is 41.1 sec(-1) with lacto-N-tetraose as substrate (PubMed:23479733). kcat is 89 sec(-1) with chromogenic LNB-beta-pNP (beta-D-Gal-(1-&gt;3)-beta-D-GlcNAc-pNP) as substrate (PubMed:18469123).</text>
    </kinetics>
    <phDependence>
        <text evidence="3">Optimum pH is 4.5 with LNB-beta-pNP as substrate and pH 6.0 with PA-lacto-N-tetraose.</text>
    </phDependence>
</comment>
<comment type="subcellular location">
    <subcellularLocation>
        <location evidence="1">Cell membrane</location>
        <topology evidence="1">Single-pass membrane protein</topology>
        <orientation evidence="9">Extracellular side</orientation>
    </subcellularLocation>
</comment>
<comment type="miscellaneous">
    <text evidence="7">HMOs function as prebiotics, promoting the growth of bifidobacteria in the gastrointestinal tracts of breast-fed infants, which in turn promotes optimal health.</text>
</comment>
<comment type="similarity">
    <text evidence="8">Belongs to the glycosyl hydrolase 20 family.</text>
</comment>
<accession>B3TLD6</accession>
<name>LNBB_BIFB1</name>
<proteinExistence type="evidence at protein level"/>
<sequence length="1112" mass="119514">MEKSSNRRFGVRTVAAIVAGLMVGGMCTAMTASAADDSAAGYSATAPVNLTRPATVPSMDGWTDGTGAWTLGEGTRVVSSDALAARAQSLASELTKFTDVDIKAATGSATGKDISLTLDASKKAELGDEGFKLNIGSKGLEVIGATDIGVFYGTRSVSQMLRQGQLTLPAGTVATKPKYKERGATLCACQINISTDWIDRFLSDMADLRLNYVLLEMKLKPEEDNTKKAATWSYYTRDDVKKFVKKANNYGIDVIPEINSPGHMNVWLENYPEYQLADNSGRKDPNKLDISNPEAVKFYKTLIDEYDGVFTTKYWHMGADEYMIGTSFDNYSKLKTFAEKQYGAGATPNDAFTGFINDIDKYVKAKGKQLRIWNDGIVNTKNVSLNKDIVIEYWYGAGRKPQELVQDGYTLMNATQALYWSRSAQVYKVNAARLYNNNWNVGTFDGGRQIDKNYDKLTGAKVSIWPDSSYFQTENEVEKEIFDGMRFISQMTWSDSRPWATWNDMKADIDKIGYPLDIREYDYTPVDAGIYDIPQLKSISKGPWELITTPDGYYQMKDTVSGKCLALFTGSKHLDVVTQVGARPELRNCADVSVGQDQRNTANERNTQKWQIRADKDGKYTISPALTQQRLAIATGNEQNIDLETHRPAAGTVAQFPADLVSDNALFTLTGHMGMSATVDSKTVNPASPSKITVKVRAASNANTGDVTVTPVVPEGWEIKPGSVSLKSIPAGKAAIAYFNVVNTTGTGDATVQFKLTNTKTGEELGTTSVALTGSLTKDVEASDYAASSQETTGEHAPVGNAFDKNANTFWHSKYSNPSANLPHWLAFKASPGEGNKIAAITHLYRQDKLNGPAKNVAVYVVAASDANSVADVTNWGEPVATAEFPYTKELQTIALPNTIPSGDVYVKFQINDAWGLTETSAGVTWAAVAELAATAKATPVELTEPEQPKDNPEVTETPEATGVTVSGDGVANGALSLKKGTTAQLTAKVAPDDADQAVTWASSDDKVVTVDKTGKVTAVAKGVAKVTATTANGKSASVTVTVTEDSEVPGPTGPTEPTKPGTEKPTTKPTTKPNDGKLSATGADTAVLATIAALFALAGGAVVAVRRRSVR</sequence>
<organism>
    <name type="scientific">Bifidobacterium bifidum (strain DSM 20082 / JCM 1254 / BCRC 11844 / KCTC 3440 / E319f (Variant a))</name>
    <dbReference type="NCBI Taxonomy" id="398514"/>
    <lineage>
        <taxon>Bacteria</taxon>
        <taxon>Bacillati</taxon>
        <taxon>Actinomycetota</taxon>
        <taxon>Actinomycetes</taxon>
        <taxon>Bifidobacteriales</taxon>
        <taxon>Bifidobacteriaceae</taxon>
        <taxon>Bifidobacterium</taxon>
    </lineage>
</organism>
<feature type="signal peptide" evidence="1">
    <location>
        <begin position="1"/>
        <end position="34"/>
    </location>
</feature>
<feature type="chain" id="PRO_5002799108" description="Lacto-N-biosidase">
    <location>
        <begin position="35"/>
        <end position="1112"/>
    </location>
</feature>
<feature type="transmembrane region" description="Helical" evidence="1">
    <location>
        <begin position="1086"/>
        <end position="1106"/>
    </location>
</feature>
<feature type="domain" description="BIG2" evidence="1">
    <location>
        <begin position="975"/>
        <end position="1041"/>
    </location>
</feature>
<feature type="region of interest" description="Disordered" evidence="2">
    <location>
        <begin position="938"/>
        <end position="969"/>
    </location>
</feature>
<feature type="region of interest" description="Disordered" evidence="2">
    <location>
        <begin position="1044"/>
        <end position="1081"/>
    </location>
</feature>
<feature type="compositionally biased region" description="Low complexity" evidence="2">
    <location>
        <begin position="1044"/>
        <end position="1061"/>
    </location>
</feature>
<feature type="active site" description="Proton donor/acceptor" evidence="10">
    <location>
        <position position="321"/>
    </location>
</feature>
<feature type="binding site" evidence="4 12">
    <location>
        <position position="190"/>
    </location>
    <ligand>
        <name>beta-D-galactosyl-(1-&gt;3)-N-acetyl-D-glucosamine</name>
        <dbReference type="ChEBI" id="CHEBI:27707"/>
    </ligand>
</feature>
<feature type="binding site" evidence="4 12">
    <location>
        <position position="216"/>
    </location>
    <ligand>
        <name>beta-D-galactosyl-(1-&gt;3)-N-acetyl-D-glucosamine</name>
        <dbReference type="ChEBI" id="CHEBI:27707"/>
    </ligand>
</feature>
<feature type="binding site" evidence="4 12">
    <location>
        <position position="259"/>
    </location>
    <ligand>
        <name>beta-D-galactosyl-(1-&gt;3)-N-acetyl-D-glucosamine</name>
        <dbReference type="ChEBI" id="CHEBI:27707"/>
    </ligand>
</feature>
<feature type="binding site" evidence="4 12">
    <location>
        <position position="320"/>
    </location>
    <ligand>
        <name>beta-D-galactosyl-(1-&gt;3)-N-acetyl-D-glucosamine</name>
        <dbReference type="ChEBI" id="CHEBI:27707"/>
    </ligand>
</feature>
<feature type="binding site" evidence="4 12">
    <location>
        <position position="321"/>
    </location>
    <ligand>
        <name>beta-D-galactosyl-(1-&gt;3)-N-acetyl-D-glucosamine</name>
        <dbReference type="ChEBI" id="CHEBI:27707"/>
    </ligand>
</feature>
<feature type="binding site" evidence="4 12">
    <location>
        <position position="419"/>
    </location>
    <ligand>
        <name>beta-D-galactosyl-(1-&gt;3)-N-acetyl-D-glucosamine</name>
        <dbReference type="ChEBI" id="CHEBI:27707"/>
    </ligand>
</feature>
<feature type="binding site" evidence="4 12">
    <location>
        <position position="467"/>
    </location>
    <ligand>
        <name>beta-D-galactosyl-(1-&gt;3)-N-acetyl-D-glucosamine</name>
        <dbReference type="ChEBI" id="CHEBI:27707"/>
    </ligand>
</feature>
<feature type="disulfide bond" evidence="4 5 13 14">
    <location>
        <begin position="187"/>
        <end position="189"/>
    </location>
</feature>
<feature type="disulfide bond" evidence="4 5 12 13 14">
    <location>
        <begin position="564"/>
        <end position="589"/>
    </location>
</feature>
<feature type="mutagenesis site" description="Does not affect the affinity for LNB-beta-pNP, but shows a reduced kcat value." evidence="4">
    <original>H</original>
    <variation>F</variation>
    <location>
        <position position="263"/>
    </location>
</feature>
<feature type="mutagenesis site" description="Does not affect the affinity for LNB-beta-pNP, but exhibits significantly reduced kcat value." evidence="4">
    <original>D</original>
    <variation>A</variation>
    <variation>N</variation>
    <location>
        <position position="320"/>
    </location>
</feature>
<feature type="mutagenesis site" description="Significantly reduces both the affinity and kcat value for LNB-beta-pNP." evidence="4">
    <original>Y</original>
    <variation>F</variation>
    <location>
        <position position="419"/>
    </location>
</feature>
<feature type="strand" evidence="19">
    <location>
        <begin position="41"/>
        <end position="44"/>
    </location>
</feature>
<feature type="strand" evidence="19">
    <location>
        <begin position="63"/>
        <end position="70"/>
    </location>
</feature>
<feature type="strand" evidence="19">
    <location>
        <begin position="76"/>
        <end position="79"/>
    </location>
</feature>
<feature type="helix" evidence="18">
    <location>
        <begin position="81"/>
        <end position="83"/>
    </location>
</feature>
<feature type="helix" evidence="19">
    <location>
        <begin position="84"/>
        <end position="98"/>
    </location>
</feature>
<feature type="strand" evidence="19">
    <location>
        <begin position="103"/>
        <end position="105"/>
    </location>
</feature>
<feature type="strand" evidence="19">
    <location>
        <begin position="113"/>
        <end position="118"/>
    </location>
</feature>
<feature type="helix" evidence="19">
    <location>
        <begin position="120"/>
        <end position="122"/>
    </location>
</feature>
<feature type="helix" evidence="19">
    <location>
        <begin position="123"/>
        <end position="126"/>
    </location>
</feature>
<feature type="turn" evidence="19">
    <location>
        <begin position="127"/>
        <end position="129"/>
    </location>
</feature>
<feature type="strand" evidence="19">
    <location>
        <begin position="131"/>
        <end position="136"/>
    </location>
</feature>
<feature type="strand" evidence="19">
    <location>
        <begin position="139"/>
        <end position="146"/>
    </location>
</feature>
<feature type="helix" evidence="19">
    <location>
        <begin position="147"/>
        <end position="161"/>
    </location>
</feature>
<feature type="strand" evidence="19">
    <location>
        <begin position="162"/>
        <end position="164"/>
    </location>
</feature>
<feature type="strand" evidence="19">
    <location>
        <begin position="167"/>
        <end position="175"/>
    </location>
</feature>
<feature type="strand" evidence="19">
    <location>
        <begin position="178"/>
        <end position="187"/>
    </location>
</feature>
<feature type="helix" evidence="19">
    <location>
        <begin position="195"/>
        <end position="207"/>
    </location>
</feature>
<feature type="strand" evidence="19">
    <location>
        <begin position="212"/>
        <end position="216"/>
    </location>
</feature>
<feature type="turn" evidence="19">
    <location>
        <begin position="224"/>
        <end position="226"/>
    </location>
</feature>
<feature type="helix" evidence="19">
    <location>
        <begin position="227"/>
        <end position="229"/>
    </location>
</feature>
<feature type="helix" evidence="19">
    <location>
        <begin position="237"/>
        <end position="249"/>
    </location>
</feature>
<feature type="strand" evidence="19">
    <location>
        <begin position="253"/>
        <end position="263"/>
    </location>
</feature>
<feature type="helix" evidence="19">
    <location>
        <begin position="265"/>
        <end position="268"/>
    </location>
</feature>
<feature type="helix" evidence="19">
    <location>
        <begin position="272"/>
        <end position="274"/>
    </location>
</feature>
<feature type="strand" evidence="19">
    <location>
        <begin position="275"/>
        <end position="277"/>
    </location>
</feature>
<feature type="strand" evidence="19">
    <location>
        <begin position="283"/>
        <end position="288"/>
    </location>
</feature>
<feature type="helix" evidence="19">
    <location>
        <begin position="293"/>
        <end position="307"/>
    </location>
</feature>
<feature type="strand" evidence="19">
    <location>
        <begin position="313"/>
        <end position="318"/>
    </location>
</feature>
<feature type="turn" evidence="19">
    <location>
        <begin position="322"/>
        <end position="325"/>
    </location>
</feature>
<feature type="helix" evidence="19">
    <location>
        <begin position="328"/>
        <end position="330"/>
    </location>
</feature>
<feature type="helix" evidence="19">
    <location>
        <begin position="332"/>
        <end position="342"/>
    </location>
</feature>
<feature type="helix" evidence="19">
    <location>
        <begin position="348"/>
        <end position="364"/>
    </location>
</feature>
<feature type="turn" evidence="19">
    <location>
        <begin position="365"/>
        <end position="367"/>
    </location>
</feature>
<feature type="strand" evidence="19">
    <location>
        <begin position="369"/>
        <end position="374"/>
    </location>
</feature>
<feature type="strand" evidence="19">
    <location>
        <begin position="389"/>
        <end position="393"/>
    </location>
</feature>
<feature type="strand" evidence="20">
    <location>
        <begin position="397"/>
        <end position="399"/>
    </location>
</feature>
<feature type="helix" evidence="19">
    <location>
        <begin position="401"/>
        <end position="406"/>
    </location>
</feature>
<feature type="strand" evidence="19">
    <location>
        <begin position="411"/>
        <end position="413"/>
    </location>
</feature>
<feature type="helix" evidence="19">
    <location>
        <begin position="416"/>
        <end position="418"/>
    </location>
</feature>
<feature type="strand" evidence="19">
    <location>
        <begin position="419"/>
        <end position="423"/>
    </location>
</feature>
<feature type="helix" evidence="19">
    <location>
        <begin position="431"/>
        <end position="436"/>
    </location>
</feature>
<feature type="turn" evidence="19">
    <location>
        <begin position="445"/>
        <end position="447"/>
    </location>
</feature>
<feature type="strand" evidence="19">
    <location>
        <begin position="457"/>
        <end position="465"/>
    </location>
</feature>
<feature type="helix" evidence="19">
    <location>
        <begin position="469"/>
        <end position="471"/>
    </location>
</feature>
<feature type="helix" evidence="19">
    <location>
        <begin position="474"/>
        <end position="493"/>
    </location>
</feature>
<feature type="strand" evidence="19">
    <location>
        <begin position="499"/>
        <end position="501"/>
    </location>
</feature>
<feature type="helix" evidence="19">
    <location>
        <begin position="502"/>
        <end position="512"/>
    </location>
</feature>
<feature type="helix" evidence="19">
    <location>
        <begin position="516"/>
        <end position="519"/>
    </location>
</feature>
<feature type="strand" evidence="19">
    <location>
        <begin position="528"/>
        <end position="532"/>
    </location>
</feature>
<feature type="helix" evidence="19">
    <location>
        <begin position="534"/>
        <end position="536"/>
    </location>
</feature>
<feature type="turn" evidence="19">
    <location>
        <begin position="537"/>
        <end position="539"/>
    </location>
</feature>
<feature type="strand" evidence="19">
    <location>
        <begin position="544"/>
        <end position="548"/>
    </location>
</feature>
<feature type="strand" evidence="19">
    <location>
        <begin position="554"/>
        <end position="558"/>
    </location>
</feature>
<feature type="turn" evidence="19">
    <location>
        <begin position="559"/>
        <end position="561"/>
    </location>
</feature>
<feature type="strand" evidence="19">
    <location>
        <begin position="564"/>
        <end position="566"/>
    </location>
</feature>
<feature type="strand" evidence="19">
    <location>
        <begin position="585"/>
        <end position="587"/>
    </location>
</feature>
<feature type="helix" evidence="19">
    <location>
        <begin position="599"/>
        <end position="601"/>
    </location>
</feature>
<feature type="helix" evidence="19">
    <location>
        <begin position="602"/>
        <end position="606"/>
    </location>
</feature>
<feature type="strand" evidence="19">
    <location>
        <begin position="610"/>
        <end position="614"/>
    </location>
</feature>
<feature type="strand" evidence="19">
    <location>
        <begin position="620"/>
        <end position="624"/>
    </location>
</feature>
<feature type="turn" evidence="19">
    <location>
        <begin position="625"/>
        <end position="627"/>
    </location>
</feature>
<feature type="strand" evidence="19">
    <location>
        <begin position="630"/>
        <end position="633"/>
    </location>
</feature>
<feature type="helix" evidence="19">
    <location>
        <begin position="641"/>
        <end position="644"/>
    </location>
</feature>
<feature type="strand" evidence="19">
    <location>
        <begin position="652"/>
        <end position="656"/>
    </location>
</feature>
<feature type="helix" evidence="19">
    <location>
        <begin position="658"/>
        <end position="660"/>
    </location>
</feature>
<reference key="1">
    <citation type="journal article" date="2008" name="Appl. Environ. Microbiol.">
        <title>Bifidobacterium bifidum lacto-N-biosidase, a critical enzyme for the degradation of human milk oligosaccharides with a type 1 structure.</title>
        <authorList>
            <person name="Wada J."/>
            <person name="Ando T."/>
            <person name="Kiyohara M."/>
            <person name="Ashida H."/>
            <person name="Kitaoka M."/>
            <person name="Yamaguchi M."/>
            <person name="Kumagai H."/>
            <person name="Katayama T."/>
            <person name="Yamamoto K."/>
        </authorList>
    </citation>
    <scope>NUCLEOTIDE SEQUENCE [GENOMIC DNA]</scope>
    <scope>FUNCTION</scope>
    <scope>CATALYTIC ACTIVITY</scope>
    <scope>SUBSTRATE SPECIFICITY</scope>
    <scope>BIOPHYSICOCHEMICAL PROPERTIES</scope>
    <scope>SUBCELLULAR LOCATION</scope>
    <source>
        <strain>DSM 20082 / JCM 1254 / BCRC 11844 / KCTC 3440 / E319f (Variant a)</strain>
    </source>
</reference>
<reference evidence="12 13" key="2">
    <citation type="journal article" date="2013" name="J. Biol. Chem.">
        <title>Crystal structures of a glycoside hydrolase family 20 lacto-N-biosidase from Bifidobacterium bifidum.</title>
        <authorList>
            <person name="Ito T."/>
            <person name="Katayama T."/>
            <person name="Hattie M."/>
            <person name="Sakurama H."/>
            <person name="Wada J."/>
            <person name="Suzuki R."/>
            <person name="Ashida H."/>
            <person name="Wakagi T."/>
            <person name="Yamamoto K."/>
            <person name="Stubbs K.A."/>
            <person name="Fushinobu S."/>
        </authorList>
    </citation>
    <scope>X-RAY CRYSTALLOGRAPHY (1.80 ANGSTROMS) OF 41-663 IN COMPLEXES WITH LNB AND LNB-THIAZOLIN</scope>
    <scope>FUNCTION</scope>
    <scope>CATALYTIC ACTIVITY</scope>
    <scope>BIOPHYSICOCHEMICAL PROPERTIES</scope>
    <scope>REACTION MECHANISM</scope>
    <scope>ACTIVE SITE</scope>
    <scope>DISULFIDE BONDS</scope>
    <scope>MUTAGENESIS OF HIS-263; ASP-320 AND TYR-419</scope>
</reference>
<reference evidence="14 15 16 17" key="3">
    <citation type="journal article" date="2015" name="Chem. Commun. (Camb.)">
        <title>Gaining insight into the catalysis by GH20 lacto-N-biosidase using small molecule inhibitors and structural analysis.</title>
        <authorList>
            <person name="Hattie M."/>
            <person name="Ito T."/>
            <person name="Debowski A.W."/>
            <person name="Arakawa T."/>
            <person name="Katayama T."/>
            <person name="Yamamoto K."/>
            <person name="Fushinobu S."/>
            <person name="Stubbs K.A."/>
        </authorList>
    </citation>
    <scope>X-RAY CRYSTALLOGRAPHY (1.60 ANGSTROMS) OF 41-663 IN COMPLEXES WITH VARIOUS SMALL MOLECULE INHIBITORS</scope>
    <scope>DISULFIDE BONDS</scope>
</reference>
<keyword id="KW-0002">3D-structure</keyword>
<keyword id="KW-1003">Cell membrane</keyword>
<keyword id="KW-1015">Disulfide bond</keyword>
<keyword id="KW-0326">Glycosidase</keyword>
<keyword id="KW-0378">Hydrolase</keyword>
<keyword id="KW-0472">Membrane</keyword>
<keyword id="KW-0732">Signal</keyword>
<keyword id="KW-0812">Transmembrane</keyword>
<keyword id="KW-1133">Transmembrane helix</keyword>
<evidence type="ECO:0000255" key="1"/>
<evidence type="ECO:0000256" key="2">
    <source>
        <dbReference type="SAM" id="MobiDB-lite"/>
    </source>
</evidence>
<evidence type="ECO:0000269" key="3">
    <source>
    </source>
</evidence>
<evidence type="ECO:0000269" key="4">
    <source>
    </source>
</evidence>
<evidence type="ECO:0000269" key="5">
    <source>
    </source>
</evidence>
<evidence type="ECO:0000303" key="6">
    <source>
    </source>
</evidence>
<evidence type="ECO:0000303" key="7">
    <source>
    </source>
</evidence>
<evidence type="ECO:0000305" key="8"/>
<evidence type="ECO:0000305" key="9">
    <source>
    </source>
</evidence>
<evidence type="ECO:0000305" key="10">
    <source>
    </source>
</evidence>
<evidence type="ECO:0000312" key="11">
    <source>
        <dbReference type="EMBL" id="ABZ78855.1"/>
    </source>
</evidence>
<evidence type="ECO:0007744" key="12">
    <source>
        <dbReference type="PDB" id="4H04"/>
    </source>
</evidence>
<evidence type="ECO:0007744" key="13">
    <source>
        <dbReference type="PDB" id="4JAW"/>
    </source>
</evidence>
<evidence type="ECO:0007744" key="14">
    <source>
        <dbReference type="PDB" id="5BXP"/>
    </source>
</evidence>
<evidence type="ECO:0007744" key="15">
    <source>
        <dbReference type="PDB" id="5BXR"/>
    </source>
</evidence>
<evidence type="ECO:0007744" key="16">
    <source>
        <dbReference type="PDB" id="5BXS"/>
    </source>
</evidence>
<evidence type="ECO:0007744" key="17">
    <source>
        <dbReference type="PDB" id="5BXT"/>
    </source>
</evidence>
<evidence type="ECO:0007829" key="18">
    <source>
        <dbReference type="PDB" id="5BXP"/>
    </source>
</evidence>
<evidence type="ECO:0007829" key="19">
    <source>
        <dbReference type="PDB" id="5BXR"/>
    </source>
</evidence>
<evidence type="ECO:0007829" key="20">
    <source>
        <dbReference type="PDB" id="5BXT"/>
    </source>
</evidence>
<gene>
    <name evidence="6 11" type="primary">lnbB</name>
</gene>
<protein>
    <recommendedName>
        <fullName evidence="6">Lacto-N-biosidase</fullName>
        <shortName>LNBase</shortName>
        <ecNumber evidence="3 4">3.2.1.140</ecNumber>
    </recommendedName>
</protein>
<dbReference type="EC" id="3.2.1.140" evidence="3 4"/>
<dbReference type="EMBL" id="EU281545">
    <property type="protein sequence ID" value="ABZ78855.1"/>
    <property type="molecule type" value="Genomic_DNA"/>
</dbReference>
<dbReference type="RefSeq" id="WP_047297638.1">
    <property type="nucleotide sequence ID" value="NZ_CAXTZK010000005.1"/>
</dbReference>
<dbReference type="PDB" id="4H04">
    <property type="method" value="X-ray"/>
    <property type="resolution" value="1.80 A"/>
    <property type="chains" value="A/B=41-663"/>
</dbReference>
<dbReference type="PDB" id="4JAW">
    <property type="method" value="X-ray"/>
    <property type="resolution" value="1.80 A"/>
    <property type="chains" value="A/B=41-663"/>
</dbReference>
<dbReference type="PDB" id="5BXP">
    <property type="method" value="X-ray"/>
    <property type="resolution" value="1.70 A"/>
    <property type="chains" value="A/B=41-663"/>
</dbReference>
<dbReference type="PDB" id="5BXR">
    <property type="method" value="X-ray"/>
    <property type="resolution" value="1.60 A"/>
    <property type="chains" value="A/B=41-663"/>
</dbReference>
<dbReference type="PDB" id="5BXS">
    <property type="method" value="X-ray"/>
    <property type="resolution" value="2.20 A"/>
    <property type="chains" value="A/B=41-663"/>
</dbReference>
<dbReference type="PDB" id="5BXT">
    <property type="method" value="X-ray"/>
    <property type="resolution" value="1.80 A"/>
    <property type="chains" value="A/B=41-663"/>
</dbReference>
<dbReference type="PDBsum" id="4H04"/>
<dbReference type="PDBsum" id="4JAW"/>
<dbReference type="PDBsum" id="5BXP"/>
<dbReference type="PDBsum" id="5BXR"/>
<dbReference type="PDBsum" id="5BXS"/>
<dbReference type="PDBsum" id="5BXT"/>
<dbReference type="SMR" id="B3TLD6"/>
<dbReference type="CAZy" id="CBM32">
    <property type="family name" value="Carbohydrate-Binding Module Family 32"/>
</dbReference>
<dbReference type="CAZy" id="GH20">
    <property type="family name" value="Glycoside Hydrolase Family 20"/>
</dbReference>
<dbReference type="BRENDA" id="3.2.1.140">
    <property type="organism ID" value="844"/>
</dbReference>
<dbReference type="SABIO-RK" id="B3TLD6"/>
<dbReference type="EvolutionaryTrace" id="B3TLD6"/>
<dbReference type="GO" id="GO:0005886">
    <property type="term" value="C:plasma membrane"/>
    <property type="evidence" value="ECO:0007669"/>
    <property type="project" value="UniProtKB-SubCell"/>
</dbReference>
<dbReference type="GO" id="GO:0004563">
    <property type="term" value="F:beta-N-acetylhexosaminidase activity"/>
    <property type="evidence" value="ECO:0007669"/>
    <property type="project" value="UniProtKB-EC"/>
</dbReference>
<dbReference type="GO" id="GO:0047403">
    <property type="term" value="F:lacto-N-biosidase activity"/>
    <property type="evidence" value="ECO:0007669"/>
    <property type="project" value="RHEA"/>
</dbReference>
<dbReference type="GO" id="GO:0005975">
    <property type="term" value="P:carbohydrate metabolic process"/>
    <property type="evidence" value="ECO:0007669"/>
    <property type="project" value="InterPro"/>
</dbReference>
<dbReference type="CDD" id="cd23386">
    <property type="entry name" value="beta-trefoil_Ricin_LNBase"/>
    <property type="match status" value="1"/>
</dbReference>
<dbReference type="CDD" id="cd06564">
    <property type="entry name" value="GH20_DspB_LnbB-like"/>
    <property type="match status" value="1"/>
</dbReference>
<dbReference type="Gene3D" id="2.60.40.1080">
    <property type="match status" value="1"/>
</dbReference>
<dbReference type="Gene3D" id="2.80.10.50">
    <property type="match status" value="1"/>
</dbReference>
<dbReference type="Gene3D" id="3.30.379.10">
    <property type="entry name" value="Chitobiase/beta-hexosaminidase domain 2-like"/>
    <property type="match status" value="1"/>
</dbReference>
<dbReference type="Gene3D" id="2.60.120.260">
    <property type="entry name" value="Galactose-binding domain-like"/>
    <property type="match status" value="1"/>
</dbReference>
<dbReference type="Gene3D" id="3.20.20.80">
    <property type="entry name" value="Glycosidases"/>
    <property type="match status" value="1"/>
</dbReference>
<dbReference type="InterPro" id="IPR025705">
    <property type="entry name" value="Beta_hexosaminidase_sua/sub"/>
</dbReference>
<dbReference type="InterPro" id="IPR003343">
    <property type="entry name" value="Big_2"/>
</dbReference>
<dbReference type="InterPro" id="IPR000421">
    <property type="entry name" value="FA58C"/>
</dbReference>
<dbReference type="InterPro" id="IPR008979">
    <property type="entry name" value="Galactose-bd-like_sf"/>
</dbReference>
<dbReference type="InterPro" id="IPR052764">
    <property type="entry name" value="GH20_Enzymes"/>
</dbReference>
<dbReference type="InterPro" id="IPR015883">
    <property type="entry name" value="Glyco_hydro_20_cat"/>
</dbReference>
<dbReference type="InterPro" id="IPR017853">
    <property type="entry name" value="Glycoside_hydrolase_SF"/>
</dbReference>
<dbReference type="InterPro" id="IPR029018">
    <property type="entry name" value="Hex-like_dom2"/>
</dbReference>
<dbReference type="InterPro" id="IPR015882">
    <property type="entry name" value="HEX_bac_N"/>
</dbReference>
<dbReference type="InterPro" id="IPR008964">
    <property type="entry name" value="Invasin/intimin_cell_adhesion"/>
</dbReference>
<dbReference type="InterPro" id="IPR035992">
    <property type="entry name" value="Ricin_B-like_lectins"/>
</dbReference>
<dbReference type="InterPro" id="IPR000772">
    <property type="entry name" value="Ricin_B_lectin"/>
</dbReference>
<dbReference type="PANTHER" id="PTHR43678:SF1">
    <property type="entry name" value="BETA-N-ACETYLHEXOSAMINIDASE"/>
    <property type="match status" value="1"/>
</dbReference>
<dbReference type="PANTHER" id="PTHR43678">
    <property type="entry name" value="PUTATIVE (AFU_ORTHOLOGUE AFUA_2G00640)-RELATED"/>
    <property type="match status" value="1"/>
</dbReference>
<dbReference type="Pfam" id="PF02368">
    <property type="entry name" value="Big_2"/>
    <property type="match status" value="1"/>
</dbReference>
<dbReference type="Pfam" id="PF00754">
    <property type="entry name" value="F5_F8_type_C"/>
    <property type="match status" value="1"/>
</dbReference>
<dbReference type="Pfam" id="PF00728">
    <property type="entry name" value="Glyco_hydro_20"/>
    <property type="match status" value="1"/>
</dbReference>
<dbReference type="Pfam" id="PF02838">
    <property type="entry name" value="Glyco_hydro_20b"/>
    <property type="match status" value="1"/>
</dbReference>
<dbReference type="Pfam" id="PF14200">
    <property type="entry name" value="RicinB_lectin_2"/>
    <property type="match status" value="1"/>
</dbReference>
<dbReference type="PRINTS" id="PR00738">
    <property type="entry name" value="GLHYDRLASE20"/>
</dbReference>
<dbReference type="SMART" id="SM00635">
    <property type="entry name" value="BID_2"/>
    <property type="match status" value="1"/>
</dbReference>
<dbReference type="SUPFAM" id="SSF51445">
    <property type="entry name" value="(Trans)glycosidases"/>
    <property type="match status" value="1"/>
</dbReference>
<dbReference type="SUPFAM" id="SSF55545">
    <property type="entry name" value="beta-N-acetylhexosaminidase-like domain"/>
    <property type="match status" value="1"/>
</dbReference>
<dbReference type="SUPFAM" id="SSF49785">
    <property type="entry name" value="Galactose-binding domain-like"/>
    <property type="match status" value="1"/>
</dbReference>
<dbReference type="SUPFAM" id="SSF49373">
    <property type="entry name" value="Invasin/intimin cell-adhesion fragments"/>
    <property type="match status" value="1"/>
</dbReference>
<dbReference type="SUPFAM" id="SSF50370">
    <property type="entry name" value="Ricin B-like lectins"/>
    <property type="match status" value="1"/>
</dbReference>